<reference key="1">
    <citation type="journal article" date="2011" name="J. Bacteriol.">
        <title>Genome of Ochrobactrum anthropi ATCC 49188 T, a versatile opportunistic pathogen and symbiont of several eukaryotic hosts.</title>
        <authorList>
            <person name="Chain P.S."/>
            <person name="Lang D.M."/>
            <person name="Comerci D.J."/>
            <person name="Malfatti S.A."/>
            <person name="Vergez L.M."/>
            <person name="Shin M."/>
            <person name="Ugalde R.A."/>
            <person name="Garcia E."/>
            <person name="Tolmasky M.E."/>
        </authorList>
    </citation>
    <scope>NUCLEOTIDE SEQUENCE [LARGE SCALE GENOMIC DNA]</scope>
    <source>
        <strain>ATCC 49188 / DSM 6882 / CCUG 24695 / JCM 21032 / LMG 3331 / NBRC 15819 / NCTC 12168 / Alc 37</strain>
    </source>
</reference>
<protein>
    <recommendedName>
        <fullName evidence="1">Cobyric acid synthase</fullName>
    </recommendedName>
</protein>
<name>COBQ_BRUA4</name>
<organism>
    <name type="scientific">Brucella anthropi (strain ATCC 49188 / DSM 6882 / CCUG 24695 / JCM 21032 / LMG 3331 / NBRC 15819 / NCTC 12168 / Alc 37)</name>
    <name type="common">Ochrobactrum anthropi</name>
    <dbReference type="NCBI Taxonomy" id="439375"/>
    <lineage>
        <taxon>Bacteria</taxon>
        <taxon>Pseudomonadati</taxon>
        <taxon>Pseudomonadota</taxon>
        <taxon>Alphaproteobacteria</taxon>
        <taxon>Hyphomicrobiales</taxon>
        <taxon>Brucellaceae</taxon>
        <taxon>Brucella/Ochrobactrum group</taxon>
        <taxon>Brucella</taxon>
    </lineage>
</organism>
<proteinExistence type="inferred from homology"/>
<accession>A6X034</accession>
<keyword id="KW-0169">Cobalamin biosynthesis</keyword>
<keyword id="KW-0315">Glutamine amidotransferase</keyword>
<keyword id="KW-1185">Reference proteome</keyword>
<comment type="function">
    <text evidence="1">Catalyzes amidations at positions B, D, E, and G on adenosylcobyrinic A,C-diamide. NH(2) groups are provided by glutamine, and one molecule of ATP is hydrogenolyzed for each amidation.</text>
</comment>
<comment type="pathway">
    <text evidence="1">Cofactor biosynthesis; adenosylcobalamin biosynthesis.</text>
</comment>
<comment type="similarity">
    <text evidence="1">Belongs to the CobB/CobQ family. CobQ subfamily.</text>
</comment>
<evidence type="ECO:0000255" key="1">
    <source>
        <dbReference type="HAMAP-Rule" id="MF_00028"/>
    </source>
</evidence>
<sequence length="483" mass="51728">MARAIMFQGTGSDVGKSVLVAGLCRVARNRGLNVRPFKPQNMSNNAAVSDDGGEIGRAQWLQALACGVPSSVHMNPVLLKPQTDMGSQVIVQGQVRGEARGRYYQELKPQLMAAVMESFARVSEGADLVLVEGAGSPAEINLRAGDIANMGFATQADVPVVLVGDIDRGGVIASLVGTHTILSEQDRAMVRGFLINKFRGDISLFDDGLAAITRFTGWRSFGVVPWLKAVSRLPAEDSVVLERAVRGDKKSLVVAVPMLPRIANFDDLDPLKAEPDVEVVMVPPGSSIPGDAGLVVLPGTKSTIADMQAVRDNGWDRQLSAHVKRGGHVLGICGGFQMLGHHISDPAGIEGHVRDIDGLGLLDIETVMEPEKVVRNVQATALLHNVPLEGYEIHIGRTTGPDMGWPFARIGEHDDGAISPDGRIMGTYLHGVFNADEFRRRFLQNLGVQSSSVNYRAGVEAALDELAEGLEACLDIDALFNLK</sequence>
<feature type="chain" id="PRO_1000002368" description="Cobyric acid synthase">
    <location>
        <begin position="1"/>
        <end position="483"/>
    </location>
</feature>
<feature type="domain" description="GATase cobBQ-type" evidence="1">
    <location>
        <begin position="251"/>
        <end position="438"/>
    </location>
</feature>
<feature type="active site" description="Nucleophile" evidence="1">
    <location>
        <position position="333"/>
    </location>
</feature>
<feature type="active site" evidence="1">
    <location>
        <position position="430"/>
    </location>
</feature>
<dbReference type="EMBL" id="CP000758">
    <property type="protein sequence ID" value="ABS14588.1"/>
    <property type="molecule type" value="Genomic_DNA"/>
</dbReference>
<dbReference type="RefSeq" id="WP_012091854.1">
    <property type="nucleotide sequence ID" value="NC_009667.1"/>
</dbReference>
<dbReference type="SMR" id="A6X034"/>
<dbReference type="STRING" id="439375.Oant_1872"/>
<dbReference type="KEGG" id="oan:Oant_1872"/>
<dbReference type="PATRIC" id="fig|439375.7.peg.1972"/>
<dbReference type="eggNOG" id="COG1492">
    <property type="taxonomic scope" value="Bacteria"/>
</dbReference>
<dbReference type="HOGENOM" id="CLU_019250_2_2_5"/>
<dbReference type="PhylomeDB" id="A6X034"/>
<dbReference type="UniPathway" id="UPA00148"/>
<dbReference type="Proteomes" id="UP000002301">
    <property type="component" value="Chromosome 1"/>
</dbReference>
<dbReference type="GO" id="GO:0015420">
    <property type="term" value="F:ABC-type vitamin B12 transporter activity"/>
    <property type="evidence" value="ECO:0007669"/>
    <property type="project" value="UniProtKB-UniRule"/>
</dbReference>
<dbReference type="GO" id="GO:0003824">
    <property type="term" value="F:catalytic activity"/>
    <property type="evidence" value="ECO:0007669"/>
    <property type="project" value="InterPro"/>
</dbReference>
<dbReference type="GO" id="GO:0009236">
    <property type="term" value="P:cobalamin biosynthetic process"/>
    <property type="evidence" value="ECO:0007669"/>
    <property type="project" value="UniProtKB-UniRule"/>
</dbReference>
<dbReference type="CDD" id="cd05389">
    <property type="entry name" value="CobQ_N"/>
    <property type="match status" value="1"/>
</dbReference>
<dbReference type="CDD" id="cd01750">
    <property type="entry name" value="GATase1_CobQ"/>
    <property type="match status" value="1"/>
</dbReference>
<dbReference type="Gene3D" id="3.40.50.880">
    <property type="match status" value="1"/>
</dbReference>
<dbReference type="Gene3D" id="3.40.50.300">
    <property type="entry name" value="P-loop containing nucleotide triphosphate hydrolases"/>
    <property type="match status" value="1"/>
</dbReference>
<dbReference type="HAMAP" id="MF_00028">
    <property type="entry name" value="CobQ"/>
    <property type="match status" value="1"/>
</dbReference>
<dbReference type="InterPro" id="IPR029062">
    <property type="entry name" value="Class_I_gatase-like"/>
</dbReference>
<dbReference type="InterPro" id="IPR002586">
    <property type="entry name" value="CobQ/CobB/MinD/ParA_Nub-bd_dom"/>
</dbReference>
<dbReference type="InterPro" id="IPR033949">
    <property type="entry name" value="CobQ_GATase1"/>
</dbReference>
<dbReference type="InterPro" id="IPR047045">
    <property type="entry name" value="CobQ_N"/>
</dbReference>
<dbReference type="InterPro" id="IPR004459">
    <property type="entry name" value="CobQ_synth"/>
</dbReference>
<dbReference type="InterPro" id="IPR011698">
    <property type="entry name" value="GATase_3"/>
</dbReference>
<dbReference type="InterPro" id="IPR027417">
    <property type="entry name" value="P-loop_NTPase"/>
</dbReference>
<dbReference type="NCBIfam" id="TIGR00313">
    <property type="entry name" value="cobQ"/>
    <property type="match status" value="1"/>
</dbReference>
<dbReference type="NCBIfam" id="NF001989">
    <property type="entry name" value="PRK00784.1"/>
    <property type="match status" value="1"/>
</dbReference>
<dbReference type="PANTHER" id="PTHR21343:SF1">
    <property type="entry name" value="COBYRIC ACID SYNTHASE"/>
    <property type="match status" value="1"/>
</dbReference>
<dbReference type="PANTHER" id="PTHR21343">
    <property type="entry name" value="DETHIOBIOTIN SYNTHETASE"/>
    <property type="match status" value="1"/>
</dbReference>
<dbReference type="Pfam" id="PF01656">
    <property type="entry name" value="CbiA"/>
    <property type="match status" value="1"/>
</dbReference>
<dbReference type="Pfam" id="PF07685">
    <property type="entry name" value="GATase_3"/>
    <property type="match status" value="1"/>
</dbReference>
<dbReference type="SUPFAM" id="SSF52317">
    <property type="entry name" value="Class I glutamine amidotransferase-like"/>
    <property type="match status" value="1"/>
</dbReference>
<dbReference type="SUPFAM" id="SSF52540">
    <property type="entry name" value="P-loop containing nucleoside triphosphate hydrolases"/>
    <property type="match status" value="1"/>
</dbReference>
<dbReference type="PROSITE" id="PS51274">
    <property type="entry name" value="GATASE_COBBQ"/>
    <property type="match status" value="1"/>
</dbReference>
<gene>
    <name evidence="1" type="primary">cobQ</name>
    <name type="ordered locus">Oant_1872</name>
</gene>